<accession>G2TRM6</accession>
<protein>
    <recommendedName>
        <fullName>Uncharacterized protein new4</fullName>
    </recommendedName>
</protein>
<reference key="1">
    <citation type="journal article" date="2002" name="Nature">
        <title>The genome sequence of Schizosaccharomyces pombe.</title>
        <authorList>
            <person name="Wood V."/>
            <person name="Gwilliam R."/>
            <person name="Rajandream M.A."/>
            <person name="Lyne M.H."/>
            <person name="Lyne R."/>
            <person name="Stewart A."/>
            <person name="Sgouros J.G."/>
            <person name="Peat N."/>
            <person name="Hayles J."/>
            <person name="Baker S.G."/>
            <person name="Basham D."/>
            <person name="Bowman S."/>
            <person name="Brooks K."/>
            <person name="Brown D."/>
            <person name="Brown S."/>
            <person name="Chillingworth T."/>
            <person name="Churcher C.M."/>
            <person name="Collins M."/>
            <person name="Connor R."/>
            <person name="Cronin A."/>
            <person name="Davis P."/>
            <person name="Feltwell T."/>
            <person name="Fraser A."/>
            <person name="Gentles S."/>
            <person name="Goble A."/>
            <person name="Hamlin N."/>
            <person name="Harris D.E."/>
            <person name="Hidalgo J."/>
            <person name="Hodgson G."/>
            <person name="Holroyd S."/>
            <person name="Hornsby T."/>
            <person name="Howarth S."/>
            <person name="Huckle E.J."/>
            <person name="Hunt S."/>
            <person name="Jagels K."/>
            <person name="James K.D."/>
            <person name="Jones L."/>
            <person name="Jones M."/>
            <person name="Leather S."/>
            <person name="McDonald S."/>
            <person name="McLean J."/>
            <person name="Mooney P."/>
            <person name="Moule S."/>
            <person name="Mungall K.L."/>
            <person name="Murphy L.D."/>
            <person name="Niblett D."/>
            <person name="Odell C."/>
            <person name="Oliver K."/>
            <person name="O'Neil S."/>
            <person name="Pearson D."/>
            <person name="Quail M.A."/>
            <person name="Rabbinowitsch E."/>
            <person name="Rutherford K.M."/>
            <person name="Rutter S."/>
            <person name="Saunders D."/>
            <person name="Seeger K."/>
            <person name="Sharp S."/>
            <person name="Skelton J."/>
            <person name="Simmonds M.N."/>
            <person name="Squares R."/>
            <person name="Squares S."/>
            <person name="Stevens K."/>
            <person name="Taylor K."/>
            <person name="Taylor R.G."/>
            <person name="Tivey A."/>
            <person name="Walsh S.V."/>
            <person name="Warren T."/>
            <person name="Whitehead S."/>
            <person name="Woodward J.R."/>
            <person name="Volckaert G."/>
            <person name="Aert R."/>
            <person name="Robben J."/>
            <person name="Grymonprez B."/>
            <person name="Weltjens I."/>
            <person name="Vanstreels E."/>
            <person name="Rieger M."/>
            <person name="Schaefer M."/>
            <person name="Mueller-Auer S."/>
            <person name="Gabel C."/>
            <person name="Fuchs M."/>
            <person name="Duesterhoeft A."/>
            <person name="Fritzc C."/>
            <person name="Holzer E."/>
            <person name="Moestl D."/>
            <person name="Hilbert H."/>
            <person name="Borzym K."/>
            <person name="Langer I."/>
            <person name="Beck A."/>
            <person name="Lehrach H."/>
            <person name="Reinhardt R."/>
            <person name="Pohl T.M."/>
            <person name="Eger P."/>
            <person name="Zimmermann W."/>
            <person name="Wedler H."/>
            <person name="Wambutt R."/>
            <person name="Purnelle B."/>
            <person name="Goffeau A."/>
            <person name="Cadieu E."/>
            <person name="Dreano S."/>
            <person name="Gloux S."/>
            <person name="Lelaure V."/>
            <person name="Mottier S."/>
            <person name="Galibert F."/>
            <person name="Aves S.J."/>
            <person name="Xiang Z."/>
            <person name="Hunt C."/>
            <person name="Moore K."/>
            <person name="Hurst S.M."/>
            <person name="Lucas M."/>
            <person name="Rochet M."/>
            <person name="Gaillardin C."/>
            <person name="Tallada V.A."/>
            <person name="Garzon A."/>
            <person name="Thode G."/>
            <person name="Daga R.R."/>
            <person name="Cruzado L."/>
            <person name="Jimenez J."/>
            <person name="Sanchez M."/>
            <person name="del Rey F."/>
            <person name="Benito J."/>
            <person name="Dominguez A."/>
            <person name="Revuelta J.L."/>
            <person name="Moreno S."/>
            <person name="Armstrong J."/>
            <person name="Forsburg S.L."/>
            <person name="Cerutti L."/>
            <person name="Lowe T."/>
            <person name="McCombie W.R."/>
            <person name="Paulsen I."/>
            <person name="Potashkin J."/>
            <person name="Shpakovski G.V."/>
            <person name="Ussery D."/>
            <person name="Barrell B.G."/>
            <person name="Nurse P."/>
        </authorList>
    </citation>
    <scope>NUCLEOTIDE SEQUENCE [LARGE SCALE GENOMIC DNA]</scope>
    <source>
        <strain>972 / ATCC 24843</strain>
    </source>
</reference>
<reference key="2">
    <citation type="journal article" date="2011" name="Science">
        <title>Comparative functional genomics of the fission yeasts.</title>
        <authorList>
            <person name="Rhind N."/>
            <person name="Chen Z."/>
            <person name="Yassour M."/>
            <person name="Thompson D.A."/>
            <person name="Haas B.J."/>
            <person name="Habib N."/>
            <person name="Wapinski I."/>
            <person name="Roy S."/>
            <person name="Lin M.F."/>
            <person name="Heiman D.I."/>
            <person name="Young S.K."/>
            <person name="Furuya K."/>
            <person name="Guo Y."/>
            <person name="Pidoux A."/>
            <person name="Chen H.M."/>
            <person name="Robbertse B."/>
            <person name="Goldberg J.M."/>
            <person name="Aoki K."/>
            <person name="Bayne E.H."/>
            <person name="Berlin A.M."/>
            <person name="Desjardins C.A."/>
            <person name="Dobbs E."/>
            <person name="Dukaj L."/>
            <person name="Fan L."/>
            <person name="FitzGerald M.G."/>
            <person name="French C."/>
            <person name="Gujja S."/>
            <person name="Hansen K."/>
            <person name="Keifenheim D."/>
            <person name="Levin J.Z."/>
            <person name="Mosher R.A."/>
            <person name="Mueller C.A."/>
            <person name="Pfiffner J."/>
            <person name="Priest M."/>
            <person name="Russ C."/>
            <person name="Smialowska A."/>
            <person name="Swoboda P."/>
            <person name="Sykes S.M."/>
            <person name="Vaughn M."/>
            <person name="Vengrova S."/>
            <person name="Yoder R."/>
            <person name="Zeng Q."/>
            <person name="Allshire R."/>
            <person name="Baulcombe D."/>
            <person name="Birren B.W."/>
            <person name="Brown W."/>
            <person name="Ekwall K."/>
            <person name="Kellis M."/>
            <person name="Leatherwood J."/>
            <person name="Levin H."/>
            <person name="Margalit H."/>
            <person name="Martienssen R."/>
            <person name="Nieduszynski C.A."/>
            <person name="Spatafora J.W."/>
            <person name="Friedman N."/>
            <person name="Dalgaard J.Z."/>
            <person name="Baumann P."/>
            <person name="Niki H."/>
            <person name="Regev A."/>
            <person name="Nusbaum C."/>
        </authorList>
    </citation>
    <scope>IDENTIFICATION</scope>
</reference>
<reference key="3">
    <citation type="journal article" date="2011" name="Genetics">
        <title>Augmented annotation of the Schizosaccharomyces pombe genome reveals additional genes required for growth and viability.</title>
        <authorList>
            <person name="Bitton D.A."/>
            <person name="Wood V."/>
            <person name="Scutt P.J."/>
            <person name="Grallert A."/>
            <person name="Yates T."/>
            <person name="Smith D.L."/>
            <person name="Hagan I.M."/>
            <person name="Miller C.J."/>
        </authorList>
    </citation>
    <scope>IDENTIFICATION BY MASS SPECTROMETRY</scope>
</reference>
<dbReference type="EMBL" id="CU329670">
    <property type="protein sequence ID" value="CCD31328.1"/>
    <property type="molecule type" value="Genomic_DNA"/>
</dbReference>
<dbReference type="RefSeq" id="XP_004001783.1">
    <property type="nucleotide sequence ID" value="XM_004001734.1"/>
</dbReference>
<dbReference type="SMR" id="G2TRM6"/>
<dbReference type="STRING" id="284812.G2TRM6"/>
<dbReference type="iPTMnet" id="G2TRM6"/>
<dbReference type="PaxDb" id="4896-SPAC3H5.13.1"/>
<dbReference type="EnsemblFungi" id="SPAC3H5.13.1">
    <property type="protein sequence ID" value="SPAC3H5.13.1:pep"/>
    <property type="gene ID" value="SPAC3H5.13"/>
</dbReference>
<dbReference type="PomBase" id="SPAC3H5.13">
    <property type="gene designation" value="new4"/>
</dbReference>
<dbReference type="VEuPathDB" id="FungiDB:SPAC3H5.13"/>
<dbReference type="HOGENOM" id="CLU_1778550_0_0_1"/>
<dbReference type="InParanoid" id="G2TRM6"/>
<dbReference type="OMA" id="IDQDEMV"/>
<dbReference type="PRO" id="PR:G2TRM6"/>
<dbReference type="Proteomes" id="UP000002485">
    <property type="component" value="Chromosome I"/>
</dbReference>
<dbReference type="GO" id="GO:0062064">
    <property type="term" value="F:box C/D methylation guide snoRNP complex binding"/>
    <property type="evidence" value="ECO:0000318"/>
    <property type="project" value="GO_Central"/>
</dbReference>
<dbReference type="GO" id="GO:0000492">
    <property type="term" value="P:box C/D snoRNP assembly"/>
    <property type="evidence" value="ECO:0000318"/>
    <property type="project" value="GO_Central"/>
</dbReference>
<dbReference type="InterPro" id="IPR027921">
    <property type="entry name" value="NOPCHAP1"/>
</dbReference>
<dbReference type="PANTHER" id="PTHR28674:SF1">
    <property type="entry name" value="NOP PROTEIN CHAPERONE 1"/>
    <property type="match status" value="1"/>
</dbReference>
<dbReference type="PANTHER" id="PTHR28674">
    <property type="entry name" value="SIMILAR TO DNA SEGMENT, CHR 10, WAYNE STATE UNIVERSITY 102,-EXPRESSED"/>
    <property type="match status" value="1"/>
</dbReference>
<dbReference type="Pfam" id="PF15370">
    <property type="entry name" value="NOPCHAP1"/>
    <property type="match status" value="1"/>
</dbReference>
<name>NEW4_SCHPO</name>
<evidence type="ECO:0000256" key="1">
    <source>
        <dbReference type="SAM" id="MobiDB-lite"/>
    </source>
</evidence>
<organism>
    <name type="scientific">Schizosaccharomyces pombe (strain 972 / ATCC 24843)</name>
    <name type="common">Fission yeast</name>
    <dbReference type="NCBI Taxonomy" id="284812"/>
    <lineage>
        <taxon>Eukaryota</taxon>
        <taxon>Fungi</taxon>
        <taxon>Dikarya</taxon>
        <taxon>Ascomycota</taxon>
        <taxon>Taphrinomycotina</taxon>
        <taxon>Schizosaccharomycetes</taxon>
        <taxon>Schizosaccharomycetales</taxon>
        <taxon>Schizosaccharomycetaceae</taxon>
        <taxon>Schizosaccharomyces</taxon>
    </lineage>
</organism>
<gene>
    <name type="primary">new4</name>
    <name type="ORF">SPAC3H5.13</name>
</gene>
<feature type="chain" id="PRO_0000416504" description="Uncharacterized protein new4">
    <location>
        <begin position="1"/>
        <end position="146"/>
    </location>
</feature>
<feature type="region of interest" description="Disordered" evidence="1">
    <location>
        <begin position="119"/>
        <end position="146"/>
    </location>
</feature>
<feature type="compositionally biased region" description="Basic and acidic residues" evidence="1">
    <location>
        <begin position="119"/>
        <end position="128"/>
    </location>
</feature>
<proteinExistence type="evidence at protein level"/>
<keyword id="KW-1185">Reference proteome</keyword>
<sequence length="146" mass="16735">MDKQIPKFEITRSSLLDQCKSFLPELEKANQTLLEHPDSQQDVQNLSDESNYIEMDLALGVLEKQPENSISEDTESEIQANENQGTLEHLMNLYNSRDREKGNEVTLTDFLHEKLSRAAQADLEHEESASIDQDEMVAIETRKTKK</sequence>